<name>ARGB_BORA1</name>
<dbReference type="EC" id="2.7.2.8" evidence="1"/>
<dbReference type="EMBL" id="AM167904">
    <property type="protein sequence ID" value="CAJ50777.1"/>
    <property type="molecule type" value="Genomic_DNA"/>
</dbReference>
<dbReference type="RefSeq" id="WP_012418805.1">
    <property type="nucleotide sequence ID" value="NC_010645.1"/>
</dbReference>
<dbReference type="SMR" id="Q2KU83"/>
<dbReference type="STRING" id="360910.BAV3167"/>
<dbReference type="KEGG" id="bav:BAV3167"/>
<dbReference type="eggNOG" id="COG0548">
    <property type="taxonomic scope" value="Bacteria"/>
</dbReference>
<dbReference type="HOGENOM" id="CLU_053680_0_0_4"/>
<dbReference type="OrthoDB" id="9803155at2"/>
<dbReference type="UniPathway" id="UPA00068">
    <property type="reaction ID" value="UER00107"/>
</dbReference>
<dbReference type="Proteomes" id="UP000001977">
    <property type="component" value="Chromosome"/>
</dbReference>
<dbReference type="GO" id="GO:0005737">
    <property type="term" value="C:cytoplasm"/>
    <property type="evidence" value="ECO:0007669"/>
    <property type="project" value="UniProtKB-SubCell"/>
</dbReference>
<dbReference type="GO" id="GO:0003991">
    <property type="term" value="F:acetylglutamate kinase activity"/>
    <property type="evidence" value="ECO:0007669"/>
    <property type="project" value="UniProtKB-UniRule"/>
</dbReference>
<dbReference type="GO" id="GO:0005524">
    <property type="term" value="F:ATP binding"/>
    <property type="evidence" value="ECO:0007669"/>
    <property type="project" value="UniProtKB-UniRule"/>
</dbReference>
<dbReference type="GO" id="GO:0042450">
    <property type="term" value="P:arginine biosynthetic process via ornithine"/>
    <property type="evidence" value="ECO:0007669"/>
    <property type="project" value="UniProtKB-UniRule"/>
</dbReference>
<dbReference type="GO" id="GO:0006526">
    <property type="term" value="P:L-arginine biosynthetic process"/>
    <property type="evidence" value="ECO:0007669"/>
    <property type="project" value="UniProtKB-UniPathway"/>
</dbReference>
<dbReference type="CDD" id="cd04250">
    <property type="entry name" value="AAK_NAGK-C"/>
    <property type="match status" value="1"/>
</dbReference>
<dbReference type="FunFam" id="3.40.1160.10:FF:000004">
    <property type="entry name" value="Acetylglutamate kinase"/>
    <property type="match status" value="1"/>
</dbReference>
<dbReference type="Gene3D" id="3.40.1160.10">
    <property type="entry name" value="Acetylglutamate kinase-like"/>
    <property type="match status" value="1"/>
</dbReference>
<dbReference type="HAMAP" id="MF_00082">
    <property type="entry name" value="ArgB"/>
    <property type="match status" value="1"/>
</dbReference>
<dbReference type="InterPro" id="IPR036393">
    <property type="entry name" value="AceGlu_kinase-like_sf"/>
</dbReference>
<dbReference type="InterPro" id="IPR004662">
    <property type="entry name" value="AcgluKinase_fam"/>
</dbReference>
<dbReference type="InterPro" id="IPR037528">
    <property type="entry name" value="ArgB"/>
</dbReference>
<dbReference type="InterPro" id="IPR001048">
    <property type="entry name" value="Asp/Glu/Uridylate_kinase"/>
</dbReference>
<dbReference type="InterPro" id="IPR001057">
    <property type="entry name" value="Glu/AcGlu_kinase"/>
</dbReference>
<dbReference type="InterPro" id="IPR041727">
    <property type="entry name" value="NAGK-C"/>
</dbReference>
<dbReference type="NCBIfam" id="TIGR00761">
    <property type="entry name" value="argB"/>
    <property type="match status" value="1"/>
</dbReference>
<dbReference type="PANTHER" id="PTHR23342">
    <property type="entry name" value="N-ACETYLGLUTAMATE SYNTHASE"/>
    <property type="match status" value="1"/>
</dbReference>
<dbReference type="PANTHER" id="PTHR23342:SF0">
    <property type="entry name" value="N-ACETYLGLUTAMATE SYNTHASE, MITOCHONDRIAL"/>
    <property type="match status" value="1"/>
</dbReference>
<dbReference type="Pfam" id="PF00696">
    <property type="entry name" value="AA_kinase"/>
    <property type="match status" value="1"/>
</dbReference>
<dbReference type="PIRSF" id="PIRSF000728">
    <property type="entry name" value="NAGK"/>
    <property type="match status" value="1"/>
</dbReference>
<dbReference type="PRINTS" id="PR00474">
    <property type="entry name" value="GLU5KINASE"/>
</dbReference>
<dbReference type="SUPFAM" id="SSF53633">
    <property type="entry name" value="Carbamate kinase-like"/>
    <property type="match status" value="1"/>
</dbReference>
<protein>
    <recommendedName>
        <fullName evidence="1">Acetylglutamate kinase</fullName>
        <ecNumber evidence="1">2.7.2.8</ecNumber>
    </recommendedName>
    <alternativeName>
        <fullName evidence="1">N-acetyl-L-glutamate 5-phosphotransferase</fullName>
    </alternativeName>
    <alternativeName>
        <fullName evidence="1">NAG kinase</fullName>
        <shortName evidence="1">NAGK</shortName>
    </alternativeName>
</protein>
<feature type="chain" id="PRO_0000264683" description="Acetylglutamate kinase">
    <location>
        <begin position="1"/>
        <end position="300"/>
    </location>
</feature>
<feature type="binding site" evidence="1">
    <location>
        <begin position="73"/>
        <end position="74"/>
    </location>
    <ligand>
        <name>substrate</name>
    </ligand>
</feature>
<feature type="binding site" evidence="1">
    <location>
        <position position="95"/>
    </location>
    <ligand>
        <name>substrate</name>
    </ligand>
</feature>
<feature type="binding site" evidence="1">
    <location>
        <position position="197"/>
    </location>
    <ligand>
        <name>substrate</name>
    </ligand>
</feature>
<feature type="site" description="Transition state stabilizer" evidence="1">
    <location>
        <position position="38"/>
    </location>
</feature>
<feature type="site" description="Transition state stabilizer" evidence="1">
    <location>
        <position position="257"/>
    </location>
</feature>
<gene>
    <name evidence="1" type="primary">argB</name>
    <name type="ordered locus">BAV3167</name>
</gene>
<accession>Q2KU83</accession>
<comment type="function">
    <text evidence="1">Catalyzes the ATP-dependent phosphorylation of N-acetyl-L-glutamate.</text>
</comment>
<comment type="catalytic activity">
    <reaction evidence="1">
        <text>N-acetyl-L-glutamate + ATP = N-acetyl-L-glutamyl 5-phosphate + ADP</text>
        <dbReference type="Rhea" id="RHEA:14629"/>
        <dbReference type="ChEBI" id="CHEBI:30616"/>
        <dbReference type="ChEBI" id="CHEBI:44337"/>
        <dbReference type="ChEBI" id="CHEBI:57936"/>
        <dbReference type="ChEBI" id="CHEBI:456216"/>
        <dbReference type="EC" id="2.7.2.8"/>
    </reaction>
</comment>
<comment type="pathway">
    <text evidence="1">Amino-acid biosynthesis; L-arginine biosynthesis; N(2)-acetyl-L-ornithine from L-glutamate: step 2/4.</text>
</comment>
<comment type="subcellular location">
    <subcellularLocation>
        <location evidence="1">Cytoplasm</location>
    </subcellularLocation>
</comment>
<comment type="similarity">
    <text evidence="1">Belongs to the acetylglutamate kinase family. ArgB subfamily.</text>
</comment>
<keyword id="KW-0028">Amino-acid biosynthesis</keyword>
<keyword id="KW-0055">Arginine biosynthesis</keyword>
<keyword id="KW-0067">ATP-binding</keyword>
<keyword id="KW-0963">Cytoplasm</keyword>
<keyword id="KW-0418">Kinase</keyword>
<keyword id="KW-0547">Nucleotide-binding</keyword>
<keyword id="KW-1185">Reference proteome</keyword>
<keyword id="KW-0808">Transferase</keyword>
<evidence type="ECO:0000255" key="1">
    <source>
        <dbReference type="HAMAP-Rule" id="MF_00082"/>
    </source>
</evidence>
<organism>
    <name type="scientific">Bordetella avium (strain 197N)</name>
    <dbReference type="NCBI Taxonomy" id="360910"/>
    <lineage>
        <taxon>Bacteria</taxon>
        <taxon>Pseudomonadati</taxon>
        <taxon>Pseudomonadota</taxon>
        <taxon>Betaproteobacteria</taxon>
        <taxon>Burkholderiales</taxon>
        <taxon>Alcaligenaceae</taxon>
        <taxon>Bordetella</taxon>
    </lineage>
</organism>
<reference key="1">
    <citation type="journal article" date="2006" name="J. Bacteriol.">
        <title>Comparison of the genome sequence of the poultry pathogen Bordetella avium with those of B. bronchiseptica, B. pertussis, and B. parapertussis reveals extensive diversity in surface structures associated with host interaction.</title>
        <authorList>
            <person name="Sebaihia M."/>
            <person name="Preston A."/>
            <person name="Maskell D.J."/>
            <person name="Kuzmiak H."/>
            <person name="Connell T.D."/>
            <person name="King N.D."/>
            <person name="Orndorff P.E."/>
            <person name="Miyamoto D.M."/>
            <person name="Thomson N.R."/>
            <person name="Harris D."/>
            <person name="Goble A."/>
            <person name="Lord A."/>
            <person name="Murphy L."/>
            <person name="Quail M.A."/>
            <person name="Rutter S."/>
            <person name="Squares R."/>
            <person name="Squares S."/>
            <person name="Woodward J."/>
            <person name="Parkhill J."/>
            <person name="Temple L.M."/>
        </authorList>
    </citation>
    <scope>NUCLEOTIDE SEQUENCE [LARGE SCALE GENOMIC DNA]</scope>
    <source>
        <strain>197N</strain>
    </source>
</reference>
<proteinExistence type="inferred from homology"/>
<sequence length="300" mass="31718">MTDTPDPAAVLSPAVKAAILSEALPYIRRFHGKTIVVKYGGNAMTEERLQRSFAHDVVLLKLVGLNPVVVHGGGPQIDDALRRLGKQGTFVQGMRVTDAETMEVVEWVLGGQVQQDIVMMINEAGGKAVGLTGKDGMLLQARKKLMADKEKPGELLDIGLVGDVTRVEPAVVKALQDDQFIPVISPIGYGEDGTAYNINADVVAGKIAEVLGAEKLLMMTNTPGVLDKSGKLLRSLSAQTIDELFADGTISGGMLPKISSALDAAKNGVPSVHVVDGRVPHCLLLELLTDQGVGTMISAH</sequence>